<evidence type="ECO:0000255" key="1">
    <source>
        <dbReference type="HAMAP-Rule" id="MF_00507"/>
    </source>
</evidence>
<proteinExistence type="inferred from homology"/>
<reference key="1">
    <citation type="journal article" date="2008" name="J. Bacteriol.">
        <title>The pangenome structure of Escherichia coli: comparative genomic analysis of E. coli commensal and pathogenic isolates.</title>
        <authorList>
            <person name="Rasko D.A."/>
            <person name="Rosovitz M.J."/>
            <person name="Myers G.S.A."/>
            <person name="Mongodin E.F."/>
            <person name="Fricke W.F."/>
            <person name="Gajer P."/>
            <person name="Crabtree J."/>
            <person name="Sebaihia M."/>
            <person name="Thomson N.R."/>
            <person name="Chaudhuri R."/>
            <person name="Henderson I.R."/>
            <person name="Sperandio V."/>
            <person name="Ravel J."/>
        </authorList>
    </citation>
    <scope>NUCLEOTIDE SEQUENCE [LARGE SCALE GENOMIC DNA]</scope>
    <source>
        <strain>E24377A / ETEC</strain>
    </source>
</reference>
<accession>A7ZMT4</accession>
<gene>
    <name evidence="1" type="primary">yoaH</name>
    <name type="ordered locus">EcE24377A_2039</name>
</gene>
<name>YOAH_ECO24</name>
<feature type="chain" id="PRO_1000060847" description="UPF0181 protein YoaH">
    <location>
        <begin position="1"/>
        <end position="59"/>
    </location>
</feature>
<protein>
    <recommendedName>
        <fullName evidence="1">UPF0181 protein YoaH</fullName>
    </recommendedName>
</protein>
<keyword id="KW-1185">Reference proteome</keyword>
<comment type="similarity">
    <text evidence="1">Belongs to the UPF0181 family.</text>
</comment>
<sequence length="59" mass="6554">MFAGLPSLTHEQQQKAVERIQELMAQGMSSGQAIALVAEELRANHSGERIVARFEDEDE</sequence>
<dbReference type="EMBL" id="CP000800">
    <property type="protein sequence ID" value="ABV18991.1"/>
    <property type="molecule type" value="Genomic_DNA"/>
</dbReference>
<dbReference type="RefSeq" id="WP_000457334.1">
    <property type="nucleotide sequence ID" value="NC_009801.1"/>
</dbReference>
<dbReference type="SMR" id="A7ZMT4"/>
<dbReference type="KEGG" id="ecw:EcE24377A_2039"/>
<dbReference type="HOGENOM" id="CLU_185263_0_0_6"/>
<dbReference type="Proteomes" id="UP000001122">
    <property type="component" value="Chromosome"/>
</dbReference>
<dbReference type="HAMAP" id="MF_00507">
    <property type="entry name" value="UPF0181"/>
    <property type="match status" value="1"/>
</dbReference>
<dbReference type="InterPro" id="IPR005371">
    <property type="entry name" value="UPF0181"/>
</dbReference>
<dbReference type="NCBIfam" id="NF003476">
    <property type="entry name" value="PRK05114.1"/>
    <property type="match status" value="1"/>
</dbReference>
<dbReference type="Pfam" id="PF03701">
    <property type="entry name" value="UPF0181"/>
    <property type="match status" value="1"/>
</dbReference>
<organism>
    <name type="scientific">Escherichia coli O139:H28 (strain E24377A / ETEC)</name>
    <dbReference type="NCBI Taxonomy" id="331111"/>
    <lineage>
        <taxon>Bacteria</taxon>
        <taxon>Pseudomonadati</taxon>
        <taxon>Pseudomonadota</taxon>
        <taxon>Gammaproteobacteria</taxon>
        <taxon>Enterobacterales</taxon>
        <taxon>Enterobacteriaceae</taxon>
        <taxon>Escherichia</taxon>
    </lineage>
</organism>